<protein>
    <recommendedName>
        <fullName evidence="1">Carnosine N-methyltransferase</fullName>
        <ecNumber evidence="1">2.1.1.22</ecNumber>
    </recommendedName>
</protein>
<organism>
    <name type="scientific">Dictyostelium discoideum</name>
    <name type="common">Social amoeba</name>
    <dbReference type="NCBI Taxonomy" id="44689"/>
    <lineage>
        <taxon>Eukaryota</taxon>
        <taxon>Amoebozoa</taxon>
        <taxon>Evosea</taxon>
        <taxon>Eumycetozoa</taxon>
        <taxon>Dictyostelia</taxon>
        <taxon>Dictyosteliales</taxon>
        <taxon>Dictyosteliaceae</taxon>
        <taxon>Dictyostelium</taxon>
    </lineage>
</organism>
<reference key="1">
    <citation type="journal article" date="2005" name="Nature">
        <title>The genome of the social amoeba Dictyostelium discoideum.</title>
        <authorList>
            <person name="Eichinger L."/>
            <person name="Pachebat J.A."/>
            <person name="Gloeckner G."/>
            <person name="Rajandream M.A."/>
            <person name="Sucgang R."/>
            <person name="Berriman M."/>
            <person name="Song J."/>
            <person name="Olsen R."/>
            <person name="Szafranski K."/>
            <person name="Xu Q."/>
            <person name="Tunggal B."/>
            <person name="Kummerfeld S."/>
            <person name="Madera M."/>
            <person name="Konfortov B.A."/>
            <person name="Rivero F."/>
            <person name="Bankier A.T."/>
            <person name="Lehmann R."/>
            <person name="Hamlin N."/>
            <person name="Davies R."/>
            <person name="Gaudet P."/>
            <person name="Fey P."/>
            <person name="Pilcher K."/>
            <person name="Chen G."/>
            <person name="Saunders D."/>
            <person name="Sodergren E.J."/>
            <person name="Davis P."/>
            <person name="Kerhornou A."/>
            <person name="Nie X."/>
            <person name="Hall N."/>
            <person name="Anjard C."/>
            <person name="Hemphill L."/>
            <person name="Bason N."/>
            <person name="Farbrother P."/>
            <person name="Desany B."/>
            <person name="Just E."/>
            <person name="Morio T."/>
            <person name="Rost R."/>
            <person name="Churcher C.M."/>
            <person name="Cooper J."/>
            <person name="Haydock S."/>
            <person name="van Driessche N."/>
            <person name="Cronin A."/>
            <person name="Goodhead I."/>
            <person name="Muzny D.M."/>
            <person name="Mourier T."/>
            <person name="Pain A."/>
            <person name="Lu M."/>
            <person name="Harper D."/>
            <person name="Lindsay R."/>
            <person name="Hauser H."/>
            <person name="James K.D."/>
            <person name="Quiles M."/>
            <person name="Madan Babu M."/>
            <person name="Saito T."/>
            <person name="Buchrieser C."/>
            <person name="Wardroper A."/>
            <person name="Felder M."/>
            <person name="Thangavelu M."/>
            <person name="Johnson D."/>
            <person name="Knights A."/>
            <person name="Loulseged H."/>
            <person name="Mungall K.L."/>
            <person name="Oliver K."/>
            <person name="Price C."/>
            <person name="Quail M.A."/>
            <person name="Urushihara H."/>
            <person name="Hernandez J."/>
            <person name="Rabbinowitsch E."/>
            <person name="Steffen D."/>
            <person name="Sanders M."/>
            <person name="Ma J."/>
            <person name="Kohara Y."/>
            <person name="Sharp S."/>
            <person name="Simmonds M.N."/>
            <person name="Spiegler S."/>
            <person name="Tivey A."/>
            <person name="Sugano S."/>
            <person name="White B."/>
            <person name="Walker D."/>
            <person name="Woodward J.R."/>
            <person name="Winckler T."/>
            <person name="Tanaka Y."/>
            <person name="Shaulsky G."/>
            <person name="Schleicher M."/>
            <person name="Weinstock G.M."/>
            <person name="Rosenthal A."/>
            <person name="Cox E.C."/>
            <person name="Chisholm R.L."/>
            <person name="Gibbs R.A."/>
            <person name="Loomis W.F."/>
            <person name="Platzer M."/>
            <person name="Kay R.R."/>
            <person name="Williams J.G."/>
            <person name="Dear P.H."/>
            <person name="Noegel A.A."/>
            <person name="Barrell B.G."/>
            <person name="Kuspa A."/>
        </authorList>
    </citation>
    <scope>NUCLEOTIDE SEQUENCE [LARGE SCALE GENOMIC DNA]</scope>
    <source>
        <strain>AX4</strain>
    </source>
</reference>
<keyword id="KW-0489">Methyltransferase</keyword>
<keyword id="KW-1185">Reference proteome</keyword>
<keyword id="KW-0949">S-adenosyl-L-methionine</keyword>
<keyword id="KW-0808">Transferase</keyword>
<evidence type="ECO:0000250" key="1">
    <source>
        <dbReference type="UniProtKB" id="Q5BJZ6"/>
    </source>
</evidence>
<evidence type="ECO:0000250" key="2">
    <source>
        <dbReference type="UniProtKB" id="Q8N4J0"/>
    </source>
</evidence>
<evidence type="ECO:0000256" key="3">
    <source>
        <dbReference type="SAM" id="MobiDB-lite"/>
    </source>
</evidence>
<evidence type="ECO:0000305" key="4"/>
<comment type="function">
    <text evidence="2">N-methyltransferase that mediates the formation of anserine (beta-alanyl-N(Pi)-methyl-L-histidine) from carnosine.</text>
</comment>
<comment type="catalytic activity">
    <reaction evidence="2">
        <text>carnosine + S-adenosyl-L-methionine = anserine + S-adenosyl-L-homocysteine + H(+)</text>
        <dbReference type="Rhea" id="RHEA:14205"/>
        <dbReference type="ChEBI" id="CHEBI:15378"/>
        <dbReference type="ChEBI" id="CHEBI:57485"/>
        <dbReference type="ChEBI" id="CHEBI:57856"/>
        <dbReference type="ChEBI" id="CHEBI:58445"/>
        <dbReference type="ChEBI" id="CHEBI:59789"/>
        <dbReference type="EC" id="2.1.1.22"/>
    </reaction>
</comment>
<comment type="similarity">
    <text evidence="4">Belongs to the carnosine N-methyltransferase family.</text>
</comment>
<name>CARME_DICDI</name>
<accession>Q54ST2</accession>
<feature type="chain" id="PRO_0000337253" description="Carnosine N-methyltransferase">
    <location>
        <begin position="1"/>
        <end position="463"/>
    </location>
</feature>
<feature type="region of interest" description="Disordered" evidence="3">
    <location>
        <begin position="1"/>
        <end position="64"/>
    </location>
</feature>
<feature type="region of interest" description="Disordered" evidence="3">
    <location>
        <begin position="79"/>
        <end position="104"/>
    </location>
</feature>
<feature type="compositionally biased region" description="Low complexity" evidence="3">
    <location>
        <begin position="9"/>
        <end position="58"/>
    </location>
</feature>
<feature type="compositionally biased region" description="Basic and acidic residues" evidence="3">
    <location>
        <begin position="79"/>
        <end position="93"/>
    </location>
</feature>
<feature type="compositionally biased region" description="Acidic residues" evidence="3">
    <location>
        <begin position="94"/>
        <end position="103"/>
    </location>
</feature>
<feature type="binding site" evidence="2">
    <location>
        <position position="215"/>
    </location>
    <ligand>
        <name>S-adenosyl-L-methionine</name>
        <dbReference type="ChEBI" id="CHEBI:59789"/>
    </ligand>
</feature>
<feature type="binding site" evidence="2">
    <location>
        <position position="218"/>
    </location>
    <ligand>
        <name>S-adenosyl-L-methionine</name>
        <dbReference type="ChEBI" id="CHEBI:59789"/>
    </ligand>
</feature>
<feature type="binding site" evidence="2">
    <location>
        <position position="260"/>
    </location>
    <ligand>
        <name>S-adenosyl-L-methionine</name>
        <dbReference type="ChEBI" id="CHEBI:59789"/>
    </ligand>
</feature>
<feature type="binding site" evidence="2">
    <location>
        <position position="281"/>
    </location>
    <ligand>
        <name>S-adenosyl-L-methionine</name>
        <dbReference type="ChEBI" id="CHEBI:59789"/>
    </ligand>
</feature>
<feature type="binding site" evidence="2">
    <location>
        <position position="351"/>
    </location>
    <ligand>
        <name>S-adenosyl-L-methionine</name>
        <dbReference type="ChEBI" id="CHEBI:59789"/>
    </ligand>
</feature>
<feature type="binding site" evidence="2">
    <location>
        <position position="352"/>
    </location>
    <ligand>
        <name>S-adenosyl-L-methionine</name>
        <dbReference type="ChEBI" id="CHEBI:59789"/>
    </ligand>
</feature>
<feature type="binding site" evidence="2">
    <location>
        <position position="367"/>
    </location>
    <ligand>
        <name>S-adenosyl-L-methionine</name>
        <dbReference type="ChEBI" id="CHEBI:59789"/>
    </ligand>
</feature>
<feature type="binding site" evidence="2">
    <location>
        <position position="371"/>
    </location>
    <ligand>
        <name>carnosine</name>
        <dbReference type="ChEBI" id="CHEBI:57485"/>
    </ligand>
</feature>
<feature type="binding site" evidence="2">
    <location>
        <position position="379"/>
    </location>
    <ligand>
        <name>S-adenosyl-L-methionine</name>
        <dbReference type="ChEBI" id="CHEBI:59789"/>
    </ligand>
</feature>
<feature type="binding site" evidence="2">
    <location>
        <position position="402"/>
    </location>
    <ligand>
        <name>carnosine</name>
        <dbReference type="ChEBI" id="CHEBI:57485"/>
    </ligand>
</feature>
<feature type="binding site" evidence="2">
    <location>
        <position position="450"/>
    </location>
    <ligand>
        <name>carnosine</name>
        <dbReference type="ChEBI" id="CHEBI:57485"/>
    </ligand>
</feature>
<gene>
    <name type="ORF">DDB_G0282239</name>
</gene>
<sequence length="463" mass="54029">MTKNKSKNKSNNSNISNNNNNNNNNNNNNNNNNNNNNNNNNNNNNNNNNNNNNNNNKNGESQLKNKNKNISENQHIYDKHNHDHSHDHNHDYDDNNEDDEEKEELEHYQLIVSTLLNYSQYSLHWVKDMQDFFHYKLSEDEKKLLPNYNAKMEALARAVLVNSQFLKKIGNEHCNIFSQSSDNSANSERIVDPTNLDHIKIDYFMMDQLKSTIRQLVREWSEEGKLERDQAFEPIKQQLLEIYGHIPFQERSKIRVYSPGAGLGRLCLEIASLGFSSQGIEYSFMMLIVSNFMLNKVEKINEFKIHPYIHQTVNVLRDIDQLRTVTIPDVLSSELLPKNNPALEFSMSAGDFTKNIEENSFDCICTCFFIDTAPNILEYVDCISKILKPGGTWINFGPLLYHHAKKKDSIELSYEQLRYLICKKQFQFKKEEIRDAEYCSNQKSLLRSIYKCQFFVVINNKPT</sequence>
<dbReference type="EC" id="2.1.1.22" evidence="1"/>
<dbReference type="EMBL" id="AAFI02000046">
    <property type="protein sequence ID" value="EAL66325.1"/>
    <property type="molecule type" value="Genomic_DNA"/>
</dbReference>
<dbReference type="RefSeq" id="XP_640303.1">
    <property type="nucleotide sequence ID" value="XM_635211.1"/>
</dbReference>
<dbReference type="SMR" id="Q54ST2"/>
<dbReference type="FunCoup" id="Q54ST2">
    <property type="interactions" value="78"/>
</dbReference>
<dbReference type="STRING" id="44689.Q54ST2"/>
<dbReference type="PaxDb" id="44689-DDB0237849"/>
<dbReference type="EnsemblProtists" id="EAL66325">
    <property type="protein sequence ID" value="EAL66325"/>
    <property type="gene ID" value="DDB_G0282239"/>
</dbReference>
<dbReference type="GeneID" id="8623479"/>
<dbReference type="KEGG" id="ddi:DDB_G0282239"/>
<dbReference type="dictyBase" id="DDB_G0282239"/>
<dbReference type="VEuPathDB" id="AmoebaDB:DDB_G0282239"/>
<dbReference type="eggNOG" id="KOG2798">
    <property type="taxonomic scope" value="Eukaryota"/>
</dbReference>
<dbReference type="HOGENOM" id="CLU_030612_0_0_1"/>
<dbReference type="InParanoid" id="Q54ST2"/>
<dbReference type="OMA" id="KQFAREW"/>
<dbReference type="PhylomeDB" id="Q54ST2"/>
<dbReference type="Reactome" id="R-DDI-70921">
    <property type="pathway name" value="Histidine catabolism"/>
</dbReference>
<dbReference type="PRO" id="PR:Q54ST2"/>
<dbReference type="Proteomes" id="UP000002195">
    <property type="component" value="Chromosome 3"/>
</dbReference>
<dbReference type="GO" id="GO:0030735">
    <property type="term" value="F:carnosine N-methyltransferase activity"/>
    <property type="evidence" value="ECO:0000250"/>
    <property type="project" value="UniProtKB"/>
</dbReference>
<dbReference type="GO" id="GO:0008757">
    <property type="term" value="F:S-adenosylmethionine-dependent methyltransferase activity"/>
    <property type="evidence" value="ECO:0000318"/>
    <property type="project" value="GO_Central"/>
</dbReference>
<dbReference type="GO" id="GO:0035498">
    <property type="term" value="P:carnosine metabolic process"/>
    <property type="evidence" value="ECO:0000250"/>
    <property type="project" value="UniProtKB"/>
</dbReference>
<dbReference type="GO" id="GO:0032259">
    <property type="term" value="P:methylation"/>
    <property type="evidence" value="ECO:0007669"/>
    <property type="project" value="UniProtKB-KW"/>
</dbReference>
<dbReference type="Gene3D" id="3.40.50.150">
    <property type="entry name" value="Vaccinia Virus protein VP39"/>
    <property type="match status" value="1"/>
</dbReference>
<dbReference type="InterPro" id="IPR012901">
    <property type="entry name" value="CARME"/>
</dbReference>
<dbReference type="InterPro" id="IPR029063">
    <property type="entry name" value="SAM-dependent_MTases_sf"/>
</dbReference>
<dbReference type="PANTHER" id="PTHR12303">
    <property type="entry name" value="CARNOSINE N-METHYLTRANSFERASE"/>
    <property type="match status" value="1"/>
</dbReference>
<dbReference type="PANTHER" id="PTHR12303:SF6">
    <property type="entry name" value="CARNOSINE N-METHYLTRANSFERASE"/>
    <property type="match status" value="1"/>
</dbReference>
<dbReference type="Pfam" id="PF07942">
    <property type="entry name" value="CARME"/>
    <property type="match status" value="1"/>
</dbReference>
<dbReference type="SMART" id="SM01296">
    <property type="entry name" value="N2227"/>
    <property type="match status" value="1"/>
</dbReference>
<dbReference type="SUPFAM" id="SSF53335">
    <property type="entry name" value="S-adenosyl-L-methionine-dependent methyltransferases"/>
    <property type="match status" value="1"/>
</dbReference>
<proteinExistence type="inferred from homology"/>